<sequence>MPIKILSPQLANQIAAGEVVERPASVVKELVENSLDAGANKIQIDIENGGANLIRIRDNGCGIPKEELSLALARHATSKIADLDDLEAILSLGFRGEALASISSVSRLTLTSRTEEQTEAWQVYAQGRDMETTIKPASHPVGTTVEVANLFFNTPARRKFLRTDKTEFSHIDEVIRRIALTKFNTAFTLTHNGKIIRQYRPAEAINQQLKRVAAICGDDFVKNALRIEWKHDDLHLSGWVATPNFSRTQNDLSYCYINGRMVRDKVISHAIRQAYAQYLPTDAYPAFVLFIDLNPHDVDVNVHPTKHEVRFHQQRLIHDFIYEGISHALNNQEQINWHTDQSAVENHEENTVREPQPNYSIRPNRATAGQNSFAPQYHEKPQQNQPHFSNTPMFPNHVSTGYRDYRSDAPSKTEQRLYAELLRTLPPTAQKDISDTAQQNISDTAKIISTEIIECSSHLRALSLIENRALLLQQNQDFFLLSLEKLQRLQWQLALKQIQIEQQALLIPIVFRLTESQFQAWQQYSDDFKKIGFEFIENQAQLRLTLNKVPSALRTQNLQKCVMAMLTRDENSSSFLTALCAQLECKTFNALADALNLLSETERLLTQTNRTAFTQLLKPVNWQPLLDEI</sequence>
<gene>
    <name type="primary">mutL</name>
    <name type="ordered locus">HI_0067</name>
</gene>
<protein>
    <recommendedName>
        <fullName>DNA mismatch repair protein MutL</fullName>
    </recommendedName>
</protein>
<name>MUTL_HAEIN</name>
<keyword id="KW-0227">DNA damage</keyword>
<keyword id="KW-0234">DNA repair</keyword>
<keyword id="KW-1185">Reference proteome</keyword>
<evidence type="ECO:0000250" key="1"/>
<evidence type="ECO:0000305" key="2"/>
<comment type="function">
    <text evidence="1">This protein is involved in the repair of mismatches in DNA. It is required for dam-dependent methyl-directed DNA mismatch repair. May act as a 'molecular matchmaker', a protein that promotes the formation of a stable complex between two or more DNA-binding proteins in an ATP-dependent manner without itself being part of a final effector complex (By similarity).</text>
</comment>
<comment type="similarity">
    <text evidence="2">Belongs to the DNA mismatch repair MutL/HexB family.</text>
</comment>
<dbReference type="EMBL" id="L42023">
    <property type="protein sequence ID" value="AAC21745.1"/>
    <property type="molecule type" value="Genomic_DNA"/>
</dbReference>
<dbReference type="PIR" id="E64046">
    <property type="entry name" value="E64046"/>
</dbReference>
<dbReference type="RefSeq" id="NP_438240.1">
    <property type="nucleotide sequence ID" value="NC_000907.1"/>
</dbReference>
<dbReference type="SMR" id="P44494"/>
<dbReference type="STRING" id="71421.HI_0067"/>
<dbReference type="EnsemblBacteria" id="AAC21745">
    <property type="protein sequence ID" value="AAC21745"/>
    <property type="gene ID" value="HI_0067"/>
</dbReference>
<dbReference type="KEGG" id="hin:HI_0067"/>
<dbReference type="PATRIC" id="fig|71421.8.peg.68"/>
<dbReference type="eggNOG" id="COG0323">
    <property type="taxonomic scope" value="Bacteria"/>
</dbReference>
<dbReference type="HOGENOM" id="CLU_004131_5_1_6"/>
<dbReference type="OrthoDB" id="9763467at2"/>
<dbReference type="PhylomeDB" id="P44494"/>
<dbReference type="BioCyc" id="HINF71421:G1GJ1-68-MONOMER"/>
<dbReference type="Proteomes" id="UP000000579">
    <property type="component" value="Chromosome"/>
</dbReference>
<dbReference type="GO" id="GO:0032300">
    <property type="term" value="C:mismatch repair complex"/>
    <property type="evidence" value="ECO:0000318"/>
    <property type="project" value="GO_Central"/>
</dbReference>
<dbReference type="GO" id="GO:0005524">
    <property type="term" value="F:ATP binding"/>
    <property type="evidence" value="ECO:0007669"/>
    <property type="project" value="InterPro"/>
</dbReference>
<dbReference type="GO" id="GO:0016887">
    <property type="term" value="F:ATP hydrolysis activity"/>
    <property type="evidence" value="ECO:0000318"/>
    <property type="project" value="GO_Central"/>
</dbReference>
<dbReference type="GO" id="GO:0140664">
    <property type="term" value="F:ATP-dependent DNA damage sensor activity"/>
    <property type="evidence" value="ECO:0007669"/>
    <property type="project" value="InterPro"/>
</dbReference>
<dbReference type="GO" id="GO:0030983">
    <property type="term" value="F:mismatched DNA binding"/>
    <property type="evidence" value="ECO:0007669"/>
    <property type="project" value="InterPro"/>
</dbReference>
<dbReference type="GO" id="GO:0006298">
    <property type="term" value="P:mismatch repair"/>
    <property type="evidence" value="ECO:0000318"/>
    <property type="project" value="GO_Central"/>
</dbReference>
<dbReference type="CDD" id="cd16926">
    <property type="entry name" value="HATPase_MutL-MLH-PMS-like"/>
    <property type="match status" value="1"/>
</dbReference>
<dbReference type="CDD" id="cd03482">
    <property type="entry name" value="MutL_Trans_MutL"/>
    <property type="match status" value="1"/>
</dbReference>
<dbReference type="FunFam" id="3.30.230.10:FF:000013">
    <property type="entry name" value="DNA mismatch repair endonuclease MutL"/>
    <property type="match status" value="1"/>
</dbReference>
<dbReference type="FunFam" id="3.30.565.10:FF:000003">
    <property type="entry name" value="DNA mismatch repair endonuclease MutL"/>
    <property type="match status" value="1"/>
</dbReference>
<dbReference type="Gene3D" id="3.30.230.10">
    <property type="match status" value="1"/>
</dbReference>
<dbReference type="Gene3D" id="3.30.565.10">
    <property type="entry name" value="Histidine kinase-like ATPase, C-terminal domain"/>
    <property type="match status" value="1"/>
</dbReference>
<dbReference type="Gene3D" id="3.30.1540.20">
    <property type="entry name" value="MutL, C-terminal domain, dimerisation subdomain"/>
    <property type="match status" value="1"/>
</dbReference>
<dbReference type="Gene3D" id="3.30.1370.100">
    <property type="entry name" value="MutL, C-terminal domain, regulatory subdomain"/>
    <property type="match status" value="1"/>
</dbReference>
<dbReference type="HAMAP" id="MF_00149">
    <property type="entry name" value="DNA_mis_repair"/>
    <property type="match status" value="1"/>
</dbReference>
<dbReference type="InterPro" id="IPR014762">
    <property type="entry name" value="DNA_mismatch_repair_CS"/>
</dbReference>
<dbReference type="InterPro" id="IPR020667">
    <property type="entry name" value="DNA_mismatch_repair_MutL"/>
</dbReference>
<dbReference type="InterPro" id="IPR013507">
    <property type="entry name" value="DNA_mismatch_S5_2-like"/>
</dbReference>
<dbReference type="InterPro" id="IPR036890">
    <property type="entry name" value="HATPase_C_sf"/>
</dbReference>
<dbReference type="InterPro" id="IPR002099">
    <property type="entry name" value="MutL/Mlh/PMS"/>
</dbReference>
<dbReference type="InterPro" id="IPR038973">
    <property type="entry name" value="MutL/Mlh/Pms-like"/>
</dbReference>
<dbReference type="InterPro" id="IPR014790">
    <property type="entry name" value="MutL_C"/>
</dbReference>
<dbReference type="InterPro" id="IPR042120">
    <property type="entry name" value="MutL_C_dimsub"/>
</dbReference>
<dbReference type="InterPro" id="IPR042121">
    <property type="entry name" value="MutL_C_regsub"/>
</dbReference>
<dbReference type="InterPro" id="IPR037198">
    <property type="entry name" value="MutL_C_sf"/>
</dbReference>
<dbReference type="InterPro" id="IPR020568">
    <property type="entry name" value="Ribosomal_Su5_D2-typ_SF"/>
</dbReference>
<dbReference type="InterPro" id="IPR014721">
    <property type="entry name" value="Ribsml_uS5_D2-typ_fold_subgr"/>
</dbReference>
<dbReference type="NCBIfam" id="TIGR00585">
    <property type="entry name" value="mutl"/>
    <property type="match status" value="1"/>
</dbReference>
<dbReference type="NCBIfam" id="NF000948">
    <property type="entry name" value="PRK00095.1-1"/>
    <property type="match status" value="1"/>
</dbReference>
<dbReference type="PANTHER" id="PTHR10073">
    <property type="entry name" value="DNA MISMATCH REPAIR PROTEIN MLH, PMS, MUTL"/>
    <property type="match status" value="1"/>
</dbReference>
<dbReference type="PANTHER" id="PTHR10073:SF12">
    <property type="entry name" value="DNA MISMATCH REPAIR PROTEIN MLH1"/>
    <property type="match status" value="1"/>
</dbReference>
<dbReference type="Pfam" id="PF01119">
    <property type="entry name" value="DNA_mis_repair"/>
    <property type="match status" value="1"/>
</dbReference>
<dbReference type="Pfam" id="PF13589">
    <property type="entry name" value="HATPase_c_3"/>
    <property type="match status" value="1"/>
</dbReference>
<dbReference type="Pfam" id="PF08676">
    <property type="entry name" value="MutL_C"/>
    <property type="match status" value="1"/>
</dbReference>
<dbReference type="SMART" id="SM01340">
    <property type="entry name" value="DNA_mis_repair"/>
    <property type="match status" value="1"/>
</dbReference>
<dbReference type="SMART" id="SM00853">
    <property type="entry name" value="MutL_C"/>
    <property type="match status" value="1"/>
</dbReference>
<dbReference type="SUPFAM" id="SSF55874">
    <property type="entry name" value="ATPase domain of HSP90 chaperone/DNA topoisomerase II/histidine kinase"/>
    <property type="match status" value="1"/>
</dbReference>
<dbReference type="SUPFAM" id="SSF118116">
    <property type="entry name" value="DNA mismatch repair protein MutL"/>
    <property type="match status" value="1"/>
</dbReference>
<dbReference type="SUPFAM" id="SSF54211">
    <property type="entry name" value="Ribosomal protein S5 domain 2-like"/>
    <property type="match status" value="1"/>
</dbReference>
<dbReference type="PROSITE" id="PS00058">
    <property type="entry name" value="DNA_MISMATCH_REPAIR_1"/>
    <property type="match status" value="1"/>
</dbReference>
<organism>
    <name type="scientific">Haemophilus influenzae (strain ATCC 51907 / DSM 11121 / KW20 / Rd)</name>
    <dbReference type="NCBI Taxonomy" id="71421"/>
    <lineage>
        <taxon>Bacteria</taxon>
        <taxon>Pseudomonadati</taxon>
        <taxon>Pseudomonadota</taxon>
        <taxon>Gammaproteobacteria</taxon>
        <taxon>Pasteurellales</taxon>
        <taxon>Pasteurellaceae</taxon>
        <taxon>Haemophilus</taxon>
    </lineage>
</organism>
<reference key="1">
    <citation type="journal article" date="1995" name="Science">
        <title>Whole-genome random sequencing and assembly of Haemophilus influenzae Rd.</title>
        <authorList>
            <person name="Fleischmann R.D."/>
            <person name="Adams M.D."/>
            <person name="White O."/>
            <person name="Clayton R.A."/>
            <person name="Kirkness E.F."/>
            <person name="Kerlavage A.R."/>
            <person name="Bult C.J."/>
            <person name="Tomb J.-F."/>
            <person name="Dougherty B.A."/>
            <person name="Merrick J.M."/>
            <person name="McKenney K."/>
            <person name="Sutton G.G."/>
            <person name="FitzHugh W."/>
            <person name="Fields C.A."/>
            <person name="Gocayne J.D."/>
            <person name="Scott J.D."/>
            <person name="Shirley R."/>
            <person name="Liu L.-I."/>
            <person name="Glodek A."/>
            <person name="Kelley J.M."/>
            <person name="Weidman J.F."/>
            <person name="Phillips C.A."/>
            <person name="Spriggs T."/>
            <person name="Hedblom E."/>
            <person name="Cotton M.D."/>
            <person name="Utterback T.R."/>
            <person name="Hanna M.C."/>
            <person name="Nguyen D.T."/>
            <person name="Saudek D.M."/>
            <person name="Brandon R.C."/>
            <person name="Fine L.D."/>
            <person name="Fritchman J.L."/>
            <person name="Fuhrmann J.L."/>
            <person name="Geoghagen N.S.M."/>
            <person name="Gnehm C.L."/>
            <person name="McDonald L.A."/>
            <person name="Small K.V."/>
            <person name="Fraser C.M."/>
            <person name="Smith H.O."/>
            <person name="Venter J.C."/>
        </authorList>
    </citation>
    <scope>NUCLEOTIDE SEQUENCE [LARGE SCALE GENOMIC DNA]</scope>
    <source>
        <strain>ATCC 51907 / DSM 11121 / KW20 / Rd</strain>
    </source>
</reference>
<feature type="chain" id="PRO_0000177947" description="DNA mismatch repair protein MutL">
    <location>
        <begin position="1"/>
        <end position="629"/>
    </location>
</feature>
<accession>P44494</accession>
<proteinExistence type="inferred from homology"/>